<keyword id="KW-0067">ATP-binding</keyword>
<keyword id="KW-0963">Cytoplasm</keyword>
<keyword id="KW-0436">Ligase</keyword>
<keyword id="KW-0460">Magnesium</keyword>
<keyword id="KW-0479">Metal-binding</keyword>
<keyword id="KW-0547">Nucleotide-binding</keyword>
<keyword id="KW-0658">Purine biosynthesis</keyword>
<keyword id="KW-1185">Reference proteome</keyword>
<name>PURL_PROM0</name>
<reference key="1">
    <citation type="journal article" date="2007" name="PLoS Genet.">
        <title>Patterns and implications of gene gain and loss in the evolution of Prochlorococcus.</title>
        <authorList>
            <person name="Kettler G.C."/>
            <person name="Martiny A.C."/>
            <person name="Huang K."/>
            <person name="Zucker J."/>
            <person name="Coleman M.L."/>
            <person name="Rodrigue S."/>
            <person name="Chen F."/>
            <person name="Lapidus A."/>
            <person name="Ferriera S."/>
            <person name="Johnson J."/>
            <person name="Steglich C."/>
            <person name="Church G.M."/>
            <person name="Richardson P."/>
            <person name="Chisholm S.W."/>
        </authorList>
    </citation>
    <scope>NUCLEOTIDE SEQUENCE [LARGE SCALE GENOMIC DNA]</scope>
    <source>
        <strain>MIT 9301</strain>
    </source>
</reference>
<proteinExistence type="inferred from homology"/>
<gene>
    <name evidence="1" type="primary">purL</name>
    <name type="ordered locus">P9301_00021</name>
</gene>
<sequence length="779" mass="85394">MINQENNDLYDLNEALQVENLTLNDYEEICKRLKKKPNRTELGMFGVMWSEHCCYRNSKPLLSKFPTKGKNVLVGPGENAGVIDVGNNQKLVFKIESHNHPSAIEPFQGAATGVGGILRDIFTMGARPIAVLNSLRFGNLDKSSNVDLLRGVVSGIAHYGNCVGVPTVGGEIDFDDSYSGNPLVNVMALGLLETEEIVCSGAKNVGSPVLYVGNTTGRDGVGGASFASSELTTTSLDDRPAVQVGDPFVEKSLIEACLDAFKTGDVIAAQDMGAAGLTCSSAEMAANGNLGISIDLDLVPSREDDMSSYQYLLSESQERMLFVVKEEKINDLIEKFNKWGLYASVIGEVIGTNEVIISHKGKIVAQIPTSALSDDTPVNFHNVINNPPDDLLNKWEWKENDLPEIHEQKIFSLKENKKFSFQEIILKLLSNPSIASKRWIYKQYDSQVQANTVFKPGKSDAAVVRLREQYKKNKSKVFSGVAASVDCNSRWVALDPFRGSIAAVAESARNVSCVGAEPVAITNNLNFSSPESEIGYWQLSSSCNGITEACKALETPVTGGNVSLYNESKNKDNLITPINPTPVIGMVGKIDNIEKAISCEWKNIDDQIWLIGSYKSDTTIAASSYLEYFHGEITGRPPKIDLLDEKFCQSFLRNAILNSLVVSSHDISDGGLAIALAESCILSAKGATIELKKDINREDNLLFAEGGSRIIFSINKIKQNEWLNYLKQNQINFPSSVYVKKIGHVSSETLKINIQDKNICNIRVEELSEKFNNSISDYF</sequence>
<feature type="chain" id="PRO_1000050332" description="Phosphoribosylformylglycinamidine synthase subunit PurL">
    <location>
        <begin position="1"/>
        <end position="779"/>
    </location>
</feature>
<feature type="active site" evidence="1">
    <location>
        <position position="52"/>
    </location>
</feature>
<feature type="active site" description="Proton acceptor" evidence="1">
    <location>
        <position position="98"/>
    </location>
</feature>
<feature type="binding site" evidence="1">
    <location>
        <position position="55"/>
    </location>
    <ligand>
        <name>ATP</name>
        <dbReference type="ChEBI" id="CHEBI:30616"/>
    </ligand>
</feature>
<feature type="binding site" evidence="1">
    <location>
        <position position="94"/>
    </location>
    <ligand>
        <name>ATP</name>
        <dbReference type="ChEBI" id="CHEBI:30616"/>
    </ligand>
</feature>
<feature type="binding site" evidence="1">
    <location>
        <position position="96"/>
    </location>
    <ligand>
        <name>Mg(2+)</name>
        <dbReference type="ChEBI" id="CHEBI:18420"/>
        <label>1</label>
    </ligand>
</feature>
<feature type="binding site" evidence="1">
    <location>
        <begin position="97"/>
        <end position="100"/>
    </location>
    <ligand>
        <name>substrate</name>
    </ligand>
</feature>
<feature type="binding site" evidence="1">
    <location>
        <position position="119"/>
    </location>
    <ligand>
        <name>substrate</name>
    </ligand>
</feature>
<feature type="binding site" evidence="1">
    <location>
        <position position="120"/>
    </location>
    <ligand>
        <name>Mg(2+)</name>
        <dbReference type="ChEBI" id="CHEBI:18420"/>
        <label>2</label>
    </ligand>
</feature>
<feature type="binding site" evidence="1">
    <location>
        <position position="243"/>
    </location>
    <ligand>
        <name>substrate</name>
    </ligand>
</feature>
<feature type="binding site" evidence="1">
    <location>
        <position position="271"/>
    </location>
    <ligand>
        <name>Mg(2+)</name>
        <dbReference type="ChEBI" id="CHEBI:18420"/>
        <label>2</label>
    </ligand>
</feature>
<feature type="binding site" evidence="1">
    <location>
        <begin position="315"/>
        <end position="317"/>
    </location>
    <ligand>
        <name>substrate</name>
    </ligand>
</feature>
<feature type="binding site" evidence="1">
    <location>
        <position position="523"/>
    </location>
    <ligand>
        <name>ATP</name>
        <dbReference type="ChEBI" id="CHEBI:30616"/>
    </ligand>
</feature>
<feature type="binding site" evidence="1">
    <location>
        <position position="560"/>
    </location>
    <ligand>
        <name>ATP</name>
        <dbReference type="ChEBI" id="CHEBI:30616"/>
    </ligand>
</feature>
<feature type="binding site" evidence="1">
    <location>
        <position position="561"/>
    </location>
    <ligand>
        <name>Mg(2+)</name>
        <dbReference type="ChEBI" id="CHEBI:18420"/>
        <label>1</label>
    </ligand>
</feature>
<feature type="binding site" evidence="1">
    <location>
        <position position="563"/>
    </location>
    <ligand>
        <name>substrate</name>
    </ligand>
</feature>
<protein>
    <recommendedName>
        <fullName evidence="1">Phosphoribosylformylglycinamidine synthase subunit PurL</fullName>
        <shortName evidence="1">FGAM synthase</shortName>
        <ecNumber evidence="1">6.3.5.3</ecNumber>
    </recommendedName>
    <alternativeName>
        <fullName evidence="1">Formylglycinamide ribonucleotide amidotransferase subunit II</fullName>
        <shortName evidence="1">FGAR amidotransferase II</shortName>
        <shortName evidence="1">FGAR-AT II</shortName>
    </alternativeName>
    <alternativeName>
        <fullName evidence="1">Glutamine amidotransferase PurL</fullName>
    </alternativeName>
    <alternativeName>
        <fullName evidence="1">Phosphoribosylformylglycinamidine synthase subunit II</fullName>
    </alternativeName>
</protein>
<accession>A3PA50</accession>
<evidence type="ECO:0000255" key="1">
    <source>
        <dbReference type="HAMAP-Rule" id="MF_00420"/>
    </source>
</evidence>
<organism>
    <name type="scientific">Prochlorococcus marinus (strain MIT 9301)</name>
    <dbReference type="NCBI Taxonomy" id="167546"/>
    <lineage>
        <taxon>Bacteria</taxon>
        <taxon>Bacillati</taxon>
        <taxon>Cyanobacteriota</taxon>
        <taxon>Cyanophyceae</taxon>
        <taxon>Synechococcales</taxon>
        <taxon>Prochlorococcaceae</taxon>
        <taxon>Prochlorococcus</taxon>
    </lineage>
</organism>
<comment type="function">
    <text evidence="1">Part of the phosphoribosylformylglycinamidine synthase complex involved in the purines biosynthetic pathway. Catalyzes the ATP-dependent conversion of formylglycinamide ribonucleotide (FGAR) and glutamine to yield formylglycinamidine ribonucleotide (FGAM) and glutamate. The FGAM synthase complex is composed of three subunits. PurQ produces an ammonia molecule by converting glutamine to glutamate. PurL transfers the ammonia molecule to FGAR to form FGAM in an ATP-dependent manner. PurS interacts with PurQ and PurL and is thought to assist in the transfer of the ammonia molecule from PurQ to PurL.</text>
</comment>
<comment type="catalytic activity">
    <reaction evidence="1">
        <text>N(2)-formyl-N(1)-(5-phospho-beta-D-ribosyl)glycinamide + L-glutamine + ATP + H2O = 2-formamido-N(1)-(5-O-phospho-beta-D-ribosyl)acetamidine + L-glutamate + ADP + phosphate + H(+)</text>
        <dbReference type="Rhea" id="RHEA:17129"/>
        <dbReference type="ChEBI" id="CHEBI:15377"/>
        <dbReference type="ChEBI" id="CHEBI:15378"/>
        <dbReference type="ChEBI" id="CHEBI:29985"/>
        <dbReference type="ChEBI" id="CHEBI:30616"/>
        <dbReference type="ChEBI" id="CHEBI:43474"/>
        <dbReference type="ChEBI" id="CHEBI:58359"/>
        <dbReference type="ChEBI" id="CHEBI:147286"/>
        <dbReference type="ChEBI" id="CHEBI:147287"/>
        <dbReference type="ChEBI" id="CHEBI:456216"/>
        <dbReference type="EC" id="6.3.5.3"/>
    </reaction>
</comment>
<comment type="pathway">
    <text evidence="1">Purine metabolism; IMP biosynthesis via de novo pathway; 5-amino-1-(5-phospho-D-ribosyl)imidazole from N(2)-formyl-N(1)-(5-phospho-D-ribosyl)glycinamide: step 1/2.</text>
</comment>
<comment type="subunit">
    <text evidence="1">Monomer. Part of the FGAM synthase complex composed of 1 PurL, 1 PurQ and 2 PurS subunits.</text>
</comment>
<comment type="subcellular location">
    <subcellularLocation>
        <location evidence="1">Cytoplasm</location>
    </subcellularLocation>
</comment>
<comment type="similarity">
    <text evidence="1">Belongs to the FGAMS family.</text>
</comment>
<dbReference type="EC" id="6.3.5.3" evidence="1"/>
<dbReference type="EMBL" id="CP000576">
    <property type="protein sequence ID" value="ABO16625.1"/>
    <property type="molecule type" value="Genomic_DNA"/>
</dbReference>
<dbReference type="RefSeq" id="WP_011862030.1">
    <property type="nucleotide sequence ID" value="NC_009091.1"/>
</dbReference>
<dbReference type="SMR" id="A3PA50"/>
<dbReference type="STRING" id="167546.P9301_00021"/>
<dbReference type="KEGG" id="pmg:P9301_00021"/>
<dbReference type="eggNOG" id="COG0046">
    <property type="taxonomic scope" value="Bacteria"/>
</dbReference>
<dbReference type="HOGENOM" id="CLU_003100_0_1_3"/>
<dbReference type="OrthoDB" id="9804441at2"/>
<dbReference type="UniPathway" id="UPA00074">
    <property type="reaction ID" value="UER00128"/>
</dbReference>
<dbReference type="Proteomes" id="UP000001430">
    <property type="component" value="Chromosome"/>
</dbReference>
<dbReference type="GO" id="GO:0005737">
    <property type="term" value="C:cytoplasm"/>
    <property type="evidence" value="ECO:0007669"/>
    <property type="project" value="UniProtKB-SubCell"/>
</dbReference>
<dbReference type="GO" id="GO:0005524">
    <property type="term" value="F:ATP binding"/>
    <property type="evidence" value="ECO:0007669"/>
    <property type="project" value="UniProtKB-UniRule"/>
</dbReference>
<dbReference type="GO" id="GO:0000287">
    <property type="term" value="F:magnesium ion binding"/>
    <property type="evidence" value="ECO:0007669"/>
    <property type="project" value="UniProtKB-UniRule"/>
</dbReference>
<dbReference type="GO" id="GO:0004642">
    <property type="term" value="F:phosphoribosylformylglycinamidine synthase activity"/>
    <property type="evidence" value="ECO:0007669"/>
    <property type="project" value="UniProtKB-UniRule"/>
</dbReference>
<dbReference type="GO" id="GO:0006189">
    <property type="term" value="P:'de novo' IMP biosynthetic process"/>
    <property type="evidence" value="ECO:0007669"/>
    <property type="project" value="UniProtKB-UniRule"/>
</dbReference>
<dbReference type="CDD" id="cd02203">
    <property type="entry name" value="PurL_repeat1"/>
    <property type="match status" value="1"/>
</dbReference>
<dbReference type="CDD" id="cd02204">
    <property type="entry name" value="PurL_repeat2"/>
    <property type="match status" value="1"/>
</dbReference>
<dbReference type="FunFam" id="3.30.1330.10:FF:000004">
    <property type="entry name" value="Phosphoribosylformylglycinamidine synthase subunit PurL"/>
    <property type="match status" value="1"/>
</dbReference>
<dbReference type="Gene3D" id="3.90.650.10">
    <property type="entry name" value="PurM-like C-terminal domain"/>
    <property type="match status" value="2"/>
</dbReference>
<dbReference type="Gene3D" id="3.30.1330.10">
    <property type="entry name" value="PurM-like, N-terminal domain"/>
    <property type="match status" value="2"/>
</dbReference>
<dbReference type="HAMAP" id="MF_00420">
    <property type="entry name" value="PurL_2"/>
    <property type="match status" value="1"/>
</dbReference>
<dbReference type="InterPro" id="IPR010074">
    <property type="entry name" value="PRibForGlyAmidine_synth_PurL"/>
</dbReference>
<dbReference type="InterPro" id="IPR041609">
    <property type="entry name" value="PurL_linker"/>
</dbReference>
<dbReference type="InterPro" id="IPR010918">
    <property type="entry name" value="PurM-like_C_dom"/>
</dbReference>
<dbReference type="InterPro" id="IPR036676">
    <property type="entry name" value="PurM-like_C_sf"/>
</dbReference>
<dbReference type="InterPro" id="IPR016188">
    <property type="entry name" value="PurM-like_N"/>
</dbReference>
<dbReference type="InterPro" id="IPR036921">
    <property type="entry name" value="PurM-like_N_sf"/>
</dbReference>
<dbReference type="NCBIfam" id="TIGR01736">
    <property type="entry name" value="FGAM_synth_II"/>
    <property type="match status" value="1"/>
</dbReference>
<dbReference type="NCBIfam" id="NF002290">
    <property type="entry name" value="PRK01213.1"/>
    <property type="match status" value="1"/>
</dbReference>
<dbReference type="PANTHER" id="PTHR43555">
    <property type="entry name" value="PHOSPHORIBOSYLFORMYLGLYCINAMIDINE SYNTHASE SUBUNIT PURL"/>
    <property type="match status" value="1"/>
</dbReference>
<dbReference type="PANTHER" id="PTHR43555:SF1">
    <property type="entry name" value="PHOSPHORIBOSYLFORMYLGLYCINAMIDINE SYNTHASE SUBUNIT PURL"/>
    <property type="match status" value="1"/>
</dbReference>
<dbReference type="Pfam" id="PF00586">
    <property type="entry name" value="AIRS"/>
    <property type="match status" value="2"/>
</dbReference>
<dbReference type="Pfam" id="PF02769">
    <property type="entry name" value="AIRS_C"/>
    <property type="match status" value="2"/>
</dbReference>
<dbReference type="Pfam" id="PF18072">
    <property type="entry name" value="FGAR-AT_linker"/>
    <property type="match status" value="1"/>
</dbReference>
<dbReference type="PIRSF" id="PIRSF001587">
    <property type="entry name" value="FGAM_synthase_II"/>
    <property type="match status" value="1"/>
</dbReference>
<dbReference type="SUPFAM" id="SSF56042">
    <property type="entry name" value="PurM C-terminal domain-like"/>
    <property type="match status" value="2"/>
</dbReference>
<dbReference type="SUPFAM" id="SSF55326">
    <property type="entry name" value="PurM N-terminal domain-like"/>
    <property type="match status" value="2"/>
</dbReference>